<name>FLZ10_ARATH</name>
<keyword id="KW-0963">Cytoplasm</keyword>
<keyword id="KW-0256">Endoplasmic reticulum</keyword>
<keyword id="KW-0479">Metal-binding</keyword>
<keyword id="KW-0539">Nucleus</keyword>
<keyword id="KW-1185">Reference proteome</keyword>
<keyword id="KW-0862">Zinc</keyword>
<keyword id="KW-0863">Zinc-finger</keyword>
<protein>
    <recommendedName>
        <fullName evidence="8">FCS-Like Zinc finger 10</fullName>
    </recommendedName>
</protein>
<evidence type="ECO:0000255" key="1">
    <source>
        <dbReference type="PROSITE-ProRule" id="PRU01131"/>
    </source>
</evidence>
<evidence type="ECO:0000256" key="2">
    <source>
        <dbReference type="SAM" id="MobiDB-lite"/>
    </source>
</evidence>
<evidence type="ECO:0000269" key="3">
    <source>
    </source>
</evidence>
<evidence type="ECO:0000269" key="4">
    <source>
    </source>
</evidence>
<evidence type="ECO:0000269" key="5">
    <source>
    </source>
</evidence>
<evidence type="ECO:0000269" key="6">
    <source>
    </source>
</evidence>
<evidence type="ECO:0000303" key="7">
    <source>
    </source>
</evidence>
<evidence type="ECO:0000303" key="8">
    <source>
    </source>
</evidence>
<evidence type="ECO:0000305" key="9"/>
<evidence type="ECO:0000312" key="10">
    <source>
        <dbReference type="Araport" id="AT5G11460"/>
    </source>
</evidence>
<evidence type="ECO:0000312" key="11">
    <source>
        <dbReference type="EMBL" id="CAB87706.1"/>
    </source>
</evidence>
<feature type="chain" id="PRO_0000445500" description="FCS-Like Zinc finger 10">
    <location>
        <begin position="1"/>
        <end position="344"/>
    </location>
</feature>
<feature type="zinc finger region" description="FLZ-type" evidence="1">
    <location>
        <begin position="270"/>
        <end position="314"/>
    </location>
</feature>
<feature type="region of interest" description="Disordered" evidence="2">
    <location>
        <begin position="309"/>
        <end position="344"/>
    </location>
</feature>
<feature type="compositionally biased region" description="Acidic residues" evidence="2">
    <location>
        <begin position="309"/>
        <end position="320"/>
    </location>
</feature>
<accession>Q9LYE4</accession>
<comment type="function">
    <text evidence="3 5">May act as an adapter to facilitate the interaction of SnRK1 complex with effector proteins, conferring tissue- and stimulus-type specific differences in the SnRK1 regulation pathway (PubMed:24600465). Negatively regulates KIN10 leading to a repression of the SnRK1 signaling pathway (PubMed:29406622).</text>
</comment>
<comment type="subunit">
    <text evidence="3 5 6">Interacts with KIN10 and KIN11 via its FLZ-type zinc finger domain (PubMed:24600465, PubMed:29406622, PubMed:29945970). Interacts with KINB1, KINB2 and KINB3 via its N-terminal part (PubMed:29945970). Forms homodimer and heterodimer with FLZ2 and FLZ12 in vitro (PubMed:29945970).</text>
</comment>
<comment type="interaction">
    <interactant intactId="EBI-25519036">
        <id>Q9LYE4</id>
    </interactant>
    <interactant intactId="EBI-4426649">
        <id>Q17TI5</id>
        <label>BRX</label>
    </interactant>
    <organismsDiffer>false</organismsDiffer>
    <experiments>3</experiments>
</comment>
<comment type="subcellular location">
    <subcellularLocation>
        <location evidence="5">Cytoplasm</location>
    </subcellularLocation>
    <subcellularLocation>
        <location evidence="5">Nucleus</location>
    </subcellularLocation>
    <subcellularLocation>
        <location evidence="5">Endoplasmic reticulum</location>
    </subcellularLocation>
    <text evidence="5">Co-localized with ER marker when associated with KIN11.</text>
</comment>
<comment type="tissue specificity">
    <text evidence="5">Early expressed in hypocotyl and cotyledon and preferentially in the stelar region of the shoot and root. Later expressed in root-shoot junction, lateral root, old or senescing leaves and in pistil and pollen of flower buds or open flowers.</text>
</comment>
<comment type="induction">
    <text evidence="4 5">Up-regulated in response to mild as well as prolonged energy depletion (PubMed:26442059, PubMed:29406622). Up-regulated by the glycolysis inhibitor 2DG (PubMed:29406622). Induced by NaCl (PubMed:26442059). Induced by abscissic acid (ABA) (PubMed:29406622).</text>
</comment>
<comment type="disruption phenotype">
    <text evidence="5">Reduced biomass and lateral roots and shorter primary roots.</text>
</comment>
<comment type="similarity">
    <text evidence="9">Belongs to the FLZ family.</text>
</comment>
<organism>
    <name type="scientific">Arabidopsis thaliana</name>
    <name type="common">Mouse-ear cress</name>
    <dbReference type="NCBI Taxonomy" id="3702"/>
    <lineage>
        <taxon>Eukaryota</taxon>
        <taxon>Viridiplantae</taxon>
        <taxon>Streptophyta</taxon>
        <taxon>Embryophyta</taxon>
        <taxon>Tracheophyta</taxon>
        <taxon>Spermatophyta</taxon>
        <taxon>Magnoliopsida</taxon>
        <taxon>eudicotyledons</taxon>
        <taxon>Gunneridae</taxon>
        <taxon>Pentapetalae</taxon>
        <taxon>rosids</taxon>
        <taxon>malvids</taxon>
        <taxon>Brassicales</taxon>
        <taxon>Brassicaceae</taxon>
        <taxon>Camelineae</taxon>
        <taxon>Arabidopsis</taxon>
    </lineage>
</organism>
<sequence length="344" mass="37869">MSQHSNYQMTTASDYYSTKPVLSAIRSHKLISSVFEGKCPSDYESAWSPTSPLDFRLFSTLGNPFAASSSRSIWRGKQRSWDSGKVGLSIVHSLVDDHHTDSSATIVLPSPDSKNIIFGSLMRSGQKPHLLSQPFTKALMPKDVIPNAVFEIGHDVIDVLELRKSGSVDAAYCSGAENFSVNNNACQVTKQDPGSLNGGTESDMEISEDYTCVISHGPNPKTTHFYGDQVMESVEREELKNRCCKNEKESIFAVAPLDLTTPVDVLPPKDFLSFCYGCSKKLGMGEDIYMYSGYKAFCSSECRSKEIDLDEEMEDGDEEEAIKSVSSSDKESKKKSNGVFFTVG</sequence>
<proteinExistence type="evidence at protein level"/>
<gene>
    <name evidence="8" type="primary">FLZ10</name>
    <name evidence="7" type="synonym">DUF581-14</name>
    <name evidence="10" type="ordered locus">At5g11460</name>
    <name evidence="11" type="ORF">F15N18.50</name>
</gene>
<reference key="1">
    <citation type="journal article" date="2000" name="Nature">
        <title>Sequence and analysis of chromosome 5 of the plant Arabidopsis thaliana.</title>
        <authorList>
            <person name="Tabata S."/>
            <person name="Kaneko T."/>
            <person name="Nakamura Y."/>
            <person name="Kotani H."/>
            <person name="Kato T."/>
            <person name="Asamizu E."/>
            <person name="Miyajima N."/>
            <person name="Sasamoto S."/>
            <person name="Kimura T."/>
            <person name="Hosouchi T."/>
            <person name="Kawashima K."/>
            <person name="Kohara M."/>
            <person name="Matsumoto M."/>
            <person name="Matsuno A."/>
            <person name="Muraki A."/>
            <person name="Nakayama S."/>
            <person name="Nakazaki N."/>
            <person name="Naruo K."/>
            <person name="Okumura S."/>
            <person name="Shinpo S."/>
            <person name="Takeuchi C."/>
            <person name="Wada T."/>
            <person name="Watanabe A."/>
            <person name="Yamada M."/>
            <person name="Yasuda M."/>
            <person name="Sato S."/>
            <person name="de la Bastide M."/>
            <person name="Huang E."/>
            <person name="Spiegel L."/>
            <person name="Gnoj L."/>
            <person name="O'Shaughnessy A."/>
            <person name="Preston R."/>
            <person name="Habermann K."/>
            <person name="Murray J."/>
            <person name="Johnson D."/>
            <person name="Rohlfing T."/>
            <person name="Nelson J."/>
            <person name="Stoneking T."/>
            <person name="Pepin K."/>
            <person name="Spieth J."/>
            <person name="Sekhon M."/>
            <person name="Armstrong J."/>
            <person name="Becker M."/>
            <person name="Belter E."/>
            <person name="Cordum H."/>
            <person name="Cordes M."/>
            <person name="Courtney L."/>
            <person name="Courtney W."/>
            <person name="Dante M."/>
            <person name="Du H."/>
            <person name="Edwards J."/>
            <person name="Fryman J."/>
            <person name="Haakensen B."/>
            <person name="Lamar E."/>
            <person name="Latreille P."/>
            <person name="Leonard S."/>
            <person name="Meyer R."/>
            <person name="Mulvaney E."/>
            <person name="Ozersky P."/>
            <person name="Riley A."/>
            <person name="Strowmatt C."/>
            <person name="Wagner-McPherson C."/>
            <person name="Wollam A."/>
            <person name="Yoakum M."/>
            <person name="Bell M."/>
            <person name="Dedhia N."/>
            <person name="Parnell L."/>
            <person name="Shah R."/>
            <person name="Rodriguez M."/>
            <person name="Hoon See L."/>
            <person name="Vil D."/>
            <person name="Baker J."/>
            <person name="Kirchoff K."/>
            <person name="Toth K."/>
            <person name="King L."/>
            <person name="Bahret A."/>
            <person name="Miller B."/>
            <person name="Marra M.A."/>
            <person name="Martienssen R."/>
            <person name="McCombie W.R."/>
            <person name="Wilson R.K."/>
            <person name="Murphy G."/>
            <person name="Bancroft I."/>
            <person name="Volckaert G."/>
            <person name="Wambutt R."/>
            <person name="Duesterhoeft A."/>
            <person name="Stiekema W."/>
            <person name="Pohl T."/>
            <person name="Entian K.-D."/>
            <person name="Terryn N."/>
            <person name="Hartley N."/>
            <person name="Bent E."/>
            <person name="Johnson S."/>
            <person name="Langham S.-A."/>
            <person name="McCullagh B."/>
            <person name="Robben J."/>
            <person name="Grymonprez B."/>
            <person name="Zimmermann W."/>
            <person name="Ramsperger U."/>
            <person name="Wedler H."/>
            <person name="Balke K."/>
            <person name="Wedler E."/>
            <person name="Peters S."/>
            <person name="van Staveren M."/>
            <person name="Dirkse W."/>
            <person name="Mooijman P."/>
            <person name="Klein Lankhorst R."/>
            <person name="Weitzenegger T."/>
            <person name="Bothe G."/>
            <person name="Rose M."/>
            <person name="Hauf J."/>
            <person name="Berneiser S."/>
            <person name="Hempel S."/>
            <person name="Feldpausch M."/>
            <person name="Lamberth S."/>
            <person name="Villarroel R."/>
            <person name="Gielen J."/>
            <person name="Ardiles W."/>
            <person name="Bents O."/>
            <person name="Lemcke K."/>
            <person name="Kolesov G."/>
            <person name="Mayer K.F.X."/>
            <person name="Rudd S."/>
            <person name="Schoof H."/>
            <person name="Schueller C."/>
            <person name="Zaccaria P."/>
            <person name="Mewes H.-W."/>
            <person name="Bevan M."/>
            <person name="Fransz P.F."/>
        </authorList>
    </citation>
    <scope>NUCLEOTIDE SEQUENCE [LARGE SCALE GENOMIC DNA]</scope>
    <source>
        <strain>cv. Columbia</strain>
    </source>
</reference>
<reference key="2">
    <citation type="journal article" date="2017" name="Plant J.">
        <title>Araport11: a complete reannotation of the Arabidopsis thaliana reference genome.</title>
        <authorList>
            <person name="Cheng C.Y."/>
            <person name="Krishnakumar V."/>
            <person name="Chan A.P."/>
            <person name="Thibaud-Nissen F."/>
            <person name="Schobel S."/>
            <person name="Town C.D."/>
        </authorList>
    </citation>
    <scope>GENOME REANNOTATION</scope>
    <source>
        <strain>cv. Columbia</strain>
    </source>
</reference>
<reference key="3">
    <citation type="submission" date="2006-08" db="EMBL/GenBank/DDBJ databases">
        <title>Arabidopsis ORF Clones.</title>
        <authorList>
            <person name="Quinitio C."/>
            <person name="Chen H."/>
            <person name="Kim C.J."/>
            <person name="Shinn P."/>
            <person name="Ecker J.R."/>
        </authorList>
    </citation>
    <scope>NUCLEOTIDE SEQUENCE [LARGE SCALE MRNA]</scope>
    <source>
        <strain>cv. Columbia</strain>
    </source>
</reference>
<reference key="4">
    <citation type="journal article" date="2014" name="Front. Plant Sci.">
        <title>The complex becomes more complex: protein-protein interactions of SnRK1 with DUF581 family proteins provide a framework for cell- and stimulus type-specific SnRK1 signaling in plants.</title>
        <authorList>
            <person name="Nietzsche M."/>
            <person name="Schiessl I."/>
            <person name="Boernke F."/>
        </authorList>
    </citation>
    <scope>GENE FAMILY</scope>
    <scope>INTERACTION WITH KIN10 AND KIN11</scope>
    <scope>FUNCTION</scope>
</reference>
<reference key="5">
    <citation type="journal article" date="2014" name="Front. Plant Sci.">
        <title>Corrigendum: The complex becomes more complex: protein-protein interactions of SnRK1 with DUF581 family proteins provide a framework for cell- and stimulus type-specific SnRK1 signaling in plants.</title>
        <authorList>
            <person name="Boernke F."/>
        </authorList>
    </citation>
    <scope>ERRATUM OF PUBMED:24600465</scope>
</reference>
<reference key="6">
    <citation type="journal article" date="2014" name="PLoS ONE">
        <title>DUF581 is plant specific FCS-like zinc finger involved in protein-protein interaction.</title>
        <authorList>
            <person name="Jamsheer K M."/>
            <person name="Laxmi A."/>
        </authorList>
    </citation>
    <scope>GENE FAMILY</scope>
    <scope>NOMENCLATURE</scope>
</reference>
<reference key="7">
    <citation type="journal article" date="2015" name="Front. Plant Sci.">
        <title>Expression of Arabidopsis FCS-Like Zinc finger genes is differentially regulated by sugars, cellular energy level, and abiotic stress.</title>
        <authorList>
            <person name="Jamsheer K M."/>
            <person name="Laxmi A."/>
        </authorList>
    </citation>
    <scope>INDUCTION</scope>
</reference>
<reference key="8">
    <citation type="journal article" date="2018" name="J. Biol. Chem.">
        <title>The FCS-like zinc finger scaffold of the kinase SnRK1 is formed by the coordinated actions of the FLZ domain and intrinsically disordered regions.</title>
        <authorList>
            <person name="Jamsheer K M."/>
            <person name="Shukla B.N."/>
            <person name="Jindal S."/>
            <person name="Gopan N."/>
            <person name="Mannully C.T."/>
            <person name="Laxmi A."/>
        </authorList>
    </citation>
    <scope>INTERACTION WITH KIN10; KIN11; KINB1; KINB2 AND KINB3</scope>
    <scope>SUBUNIT</scope>
</reference>
<reference key="9">
    <citation type="journal article" date="2018" name="Plant J.">
        <title>FCS-like zinc finger 6 and 10 repress SnRK1 signalling in Arabidopsis.</title>
        <authorList>
            <person name="Jamsheer K M."/>
            <person name="Sharma M."/>
            <person name="Singh D."/>
            <person name="Mannully C.T."/>
            <person name="Jindal S."/>
            <person name="Shukla B.N."/>
            <person name="Laxmi A."/>
        </authorList>
    </citation>
    <scope>TISSUE SPECIFICITY</scope>
    <scope>INTERACTION WITH KIN10 AND KIN11</scope>
    <scope>SUBCELLULAR LOCATION</scope>
    <scope>INDUCTION</scope>
    <scope>DISRUPTION PHENOTYPE</scope>
    <scope>FUNCTION</scope>
</reference>
<dbReference type="EMBL" id="AL163815">
    <property type="protein sequence ID" value="CAB87706.1"/>
    <property type="molecule type" value="Genomic_DNA"/>
</dbReference>
<dbReference type="EMBL" id="CP002688">
    <property type="protein sequence ID" value="AED91682.1"/>
    <property type="molecule type" value="Genomic_DNA"/>
</dbReference>
<dbReference type="EMBL" id="BT014982">
    <property type="protein sequence ID" value="AAT70433.1"/>
    <property type="molecule type" value="mRNA"/>
</dbReference>
<dbReference type="EMBL" id="BT026508">
    <property type="protein sequence ID" value="ABH04615.1"/>
    <property type="molecule type" value="mRNA"/>
</dbReference>
<dbReference type="PIR" id="T48505">
    <property type="entry name" value="T48505"/>
</dbReference>
<dbReference type="RefSeq" id="NP_196707.1">
    <property type="nucleotide sequence ID" value="NM_121184.3"/>
</dbReference>
<dbReference type="FunCoup" id="Q9LYE4">
    <property type="interactions" value="404"/>
</dbReference>
<dbReference type="IntAct" id="Q9LYE4">
    <property type="interactions" value="7"/>
</dbReference>
<dbReference type="STRING" id="3702.Q9LYE4"/>
<dbReference type="PaxDb" id="3702-AT5G11460.1"/>
<dbReference type="ProteomicsDB" id="228914"/>
<dbReference type="EnsemblPlants" id="AT5G11460.1">
    <property type="protein sequence ID" value="AT5G11460.1"/>
    <property type="gene ID" value="AT5G11460"/>
</dbReference>
<dbReference type="GeneID" id="831017"/>
<dbReference type="Gramene" id="AT5G11460.1">
    <property type="protein sequence ID" value="AT5G11460.1"/>
    <property type="gene ID" value="AT5G11460"/>
</dbReference>
<dbReference type="KEGG" id="ath:AT5G11460"/>
<dbReference type="Araport" id="AT5G11460"/>
<dbReference type="TAIR" id="AT5G11460">
    <property type="gene designation" value="FLZ10"/>
</dbReference>
<dbReference type="eggNOG" id="ENOG502QWBW">
    <property type="taxonomic scope" value="Eukaryota"/>
</dbReference>
<dbReference type="HOGENOM" id="CLU_052134_0_0_1"/>
<dbReference type="InParanoid" id="Q9LYE4"/>
<dbReference type="OMA" id="DSHCIES"/>
<dbReference type="PhylomeDB" id="Q9LYE4"/>
<dbReference type="PRO" id="PR:Q9LYE4"/>
<dbReference type="Proteomes" id="UP000006548">
    <property type="component" value="Chromosome 5"/>
</dbReference>
<dbReference type="ExpressionAtlas" id="Q9LYE4">
    <property type="expression patterns" value="baseline and differential"/>
</dbReference>
<dbReference type="GO" id="GO:0005737">
    <property type="term" value="C:cytoplasm"/>
    <property type="evidence" value="ECO:0000314"/>
    <property type="project" value="TAIR"/>
</dbReference>
<dbReference type="GO" id="GO:0005783">
    <property type="term" value="C:endoplasmic reticulum"/>
    <property type="evidence" value="ECO:0007669"/>
    <property type="project" value="UniProtKB-SubCell"/>
</dbReference>
<dbReference type="GO" id="GO:0005634">
    <property type="term" value="C:nucleus"/>
    <property type="evidence" value="ECO:0000314"/>
    <property type="project" value="TAIR"/>
</dbReference>
<dbReference type="GO" id="GO:0019900">
    <property type="term" value="F:kinase binding"/>
    <property type="evidence" value="ECO:0000353"/>
    <property type="project" value="UniProtKB"/>
</dbReference>
<dbReference type="GO" id="GO:0008270">
    <property type="term" value="F:zinc ion binding"/>
    <property type="evidence" value="ECO:0007669"/>
    <property type="project" value="UniProtKB-KW"/>
</dbReference>
<dbReference type="GO" id="GO:1902074">
    <property type="term" value="P:response to salt"/>
    <property type="evidence" value="ECO:0000270"/>
    <property type="project" value="UniProtKB"/>
</dbReference>
<dbReference type="GO" id="GO:0042594">
    <property type="term" value="P:response to starvation"/>
    <property type="evidence" value="ECO:0000270"/>
    <property type="project" value="UniProtKB"/>
</dbReference>
<dbReference type="GO" id="GO:0090351">
    <property type="term" value="P:seedling development"/>
    <property type="evidence" value="ECO:0000315"/>
    <property type="project" value="TAIR"/>
</dbReference>
<dbReference type="InterPro" id="IPR044585">
    <property type="entry name" value="FLZ10/11"/>
</dbReference>
<dbReference type="InterPro" id="IPR007650">
    <property type="entry name" value="Zf-FLZ_dom"/>
</dbReference>
<dbReference type="PANTHER" id="PTHR46868:SF5">
    <property type="entry name" value="FCS-LIKE ZINC FINGER 10"/>
    <property type="match status" value="1"/>
</dbReference>
<dbReference type="PANTHER" id="PTHR46868">
    <property type="entry name" value="FCS-LIKE ZINC FINGER 11"/>
    <property type="match status" value="1"/>
</dbReference>
<dbReference type="Pfam" id="PF04570">
    <property type="entry name" value="zf-FLZ"/>
    <property type="match status" value="1"/>
</dbReference>
<dbReference type="PROSITE" id="PS51795">
    <property type="entry name" value="ZF_FLZ"/>
    <property type="match status" value="1"/>
</dbReference>